<protein>
    <recommendedName>
        <fullName>U4-theraphotoxin-Hhn1a</fullName>
        <shortName>U4-TRTX-Hhn1a</shortName>
    </recommendedName>
    <alternativeName>
        <fullName>Hainantoxin-II.23</fullName>
        <shortName>HNTX-II.23</shortName>
    </alternativeName>
    <alternativeName>
        <fullName>Peptide F8-20.15</fullName>
    </alternativeName>
</protein>
<evidence type="ECO:0000250" key="1"/>
<evidence type="ECO:0000255" key="2"/>
<evidence type="ECO:0000305" key="3"/>
<accession>D2Y2L0</accession>
<reference key="1">
    <citation type="journal article" date="2010" name="J. Proteome Res.">
        <title>Molecular diversification of peptide toxins from the tarantula Haplopelma hainanum (Ornithoctonus hainana) venom based on transcriptomic, peptidomic, and genomic analyses.</title>
        <authorList>
            <person name="Tang X."/>
            <person name="Zhang Y."/>
            <person name="Hu W."/>
            <person name="Xu D."/>
            <person name="Tao H."/>
            <person name="Yang X."/>
            <person name="Li Y."/>
            <person name="Jiang L."/>
            <person name="Liang S."/>
        </authorList>
    </citation>
    <scope>NUCLEOTIDE SEQUENCE [LARGE SCALE GENOMIC DNA]</scope>
    <scope>PROTEIN SEQUENCE OF 49-85</scope>
    <scope>IDENTIFICATION BY MASS SPECTROMETRY</scope>
    <source>
        <tissue>Venom</tissue>
        <tissue>Venom gland</tissue>
    </source>
</reference>
<proteinExistence type="evidence at protein level"/>
<dbReference type="EMBL" id="GU293087">
    <property type="protein sequence ID" value="ADB56903.1"/>
    <property type="molecule type" value="Genomic_DNA"/>
</dbReference>
<dbReference type="SMR" id="D2Y2L0"/>
<dbReference type="ArachnoServer" id="AS001783">
    <property type="toxin name" value="U4-theraphotoxin-Hhn1a"/>
</dbReference>
<dbReference type="GO" id="GO:0005576">
    <property type="term" value="C:extracellular region"/>
    <property type="evidence" value="ECO:0007669"/>
    <property type="project" value="UniProtKB-SubCell"/>
</dbReference>
<dbReference type="GO" id="GO:0035792">
    <property type="term" value="C:host cell postsynaptic membrane"/>
    <property type="evidence" value="ECO:0007669"/>
    <property type="project" value="UniProtKB-KW"/>
</dbReference>
<dbReference type="GO" id="GO:0090729">
    <property type="term" value="F:toxin activity"/>
    <property type="evidence" value="ECO:0007669"/>
    <property type="project" value="UniProtKB-KW"/>
</dbReference>
<dbReference type="InterPro" id="IPR012625">
    <property type="entry name" value="Hwtx-2-like"/>
</dbReference>
<dbReference type="Pfam" id="PF08089">
    <property type="entry name" value="Toxin_20"/>
    <property type="match status" value="1"/>
</dbReference>
<dbReference type="SUPFAM" id="SSF57059">
    <property type="entry name" value="omega toxin-like"/>
    <property type="match status" value="1"/>
</dbReference>
<dbReference type="PROSITE" id="PS60022">
    <property type="entry name" value="HWTX_2"/>
    <property type="match status" value="1"/>
</dbReference>
<keyword id="KW-0903">Direct protein sequencing</keyword>
<keyword id="KW-1015">Disulfide bond</keyword>
<keyword id="KW-0528">Neurotoxin</keyword>
<keyword id="KW-0629">Postsynaptic neurotoxin</keyword>
<keyword id="KW-0964">Secreted</keyword>
<keyword id="KW-0732">Signal</keyword>
<keyword id="KW-0800">Toxin</keyword>
<comment type="function">
    <text evidence="1">Postsynaptic neurotoxin.</text>
</comment>
<comment type="subcellular location">
    <subcellularLocation>
        <location>Secreted</location>
    </subcellularLocation>
</comment>
<comment type="tissue specificity">
    <text>Expressed by the venom gland.</text>
</comment>
<comment type="similarity">
    <text evidence="3">Belongs to the neurotoxin 12 (Hwtx-2) family. 02 (Hwtx-2) subfamily.</text>
</comment>
<name>H2A23_CYRHA</name>
<organism>
    <name type="scientific">Cyriopagopus hainanus</name>
    <name type="common">Chinese bird spider</name>
    <name type="synonym">Haplopelma hainanum</name>
    <dbReference type="NCBI Taxonomy" id="209901"/>
    <lineage>
        <taxon>Eukaryota</taxon>
        <taxon>Metazoa</taxon>
        <taxon>Ecdysozoa</taxon>
        <taxon>Arthropoda</taxon>
        <taxon>Chelicerata</taxon>
        <taxon>Arachnida</taxon>
        <taxon>Araneae</taxon>
        <taxon>Mygalomorphae</taxon>
        <taxon>Theraphosidae</taxon>
        <taxon>Haplopelma</taxon>
    </lineage>
</organism>
<feature type="signal peptide" evidence="2">
    <location>
        <begin position="1"/>
        <end position="22"/>
    </location>
</feature>
<feature type="propeptide" id="PRO_0000400761">
    <location>
        <begin position="23"/>
        <end position="47"/>
    </location>
</feature>
<feature type="peptide" id="PRO_0000400762" description="U4-theraphotoxin-Hhn1a">
    <location>
        <begin position="48"/>
        <end position="84"/>
    </location>
</feature>
<feature type="disulfide bond" evidence="1">
    <location>
        <begin position="51"/>
        <end position="65"/>
    </location>
</feature>
<feature type="disulfide bond" evidence="1">
    <location>
        <begin position="55"/>
        <end position="76"/>
    </location>
</feature>
<feature type="disulfide bond" evidence="1">
    <location>
        <begin position="70"/>
        <end position="81"/>
    </location>
</feature>
<sequence>MKVTLIAILTRAAVLVLHTTAAEELEESQLMEVSMPDTELAAVDEERLFECSVSCEIEKEGNKDCKKKKCKGGWKCKFNMCVKV</sequence>